<keyword id="KW-0004">4Fe-4S</keyword>
<keyword id="KW-0342">GTP-binding</keyword>
<keyword id="KW-0408">Iron</keyword>
<keyword id="KW-0411">Iron-sulfur</keyword>
<keyword id="KW-0456">Lyase</keyword>
<keyword id="KW-0479">Metal-binding</keyword>
<keyword id="KW-0501">Molybdenum cofactor biosynthesis</keyword>
<keyword id="KW-0547">Nucleotide-binding</keyword>
<keyword id="KW-0949">S-adenosyl-L-methionine</keyword>
<reference key="1">
    <citation type="journal article" date="2009" name="Proc. Natl. Acad. Sci. U.S.A.">
        <title>Biogeography of the Sulfolobus islandicus pan-genome.</title>
        <authorList>
            <person name="Reno M.L."/>
            <person name="Held N.L."/>
            <person name="Fields C.J."/>
            <person name="Burke P.V."/>
            <person name="Whitaker R.J."/>
        </authorList>
    </citation>
    <scope>NUCLEOTIDE SEQUENCE [LARGE SCALE GENOMIC DNA]</scope>
    <source>
        <strain>M.16.27</strain>
    </source>
</reference>
<feature type="chain" id="PRO_1000214000" description="Probable GTP 3',8-cyclase">
    <location>
        <begin position="1"/>
        <end position="308"/>
    </location>
</feature>
<feature type="domain" description="Radical SAM core" evidence="2">
    <location>
        <begin position="4"/>
        <end position="224"/>
    </location>
</feature>
<feature type="binding site" evidence="1">
    <location>
        <position position="13"/>
    </location>
    <ligand>
        <name>GTP</name>
        <dbReference type="ChEBI" id="CHEBI:37565"/>
    </ligand>
</feature>
<feature type="binding site" evidence="1">
    <location>
        <position position="20"/>
    </location>
    <ligand>
        <name>[4Fe-4S] cluster</name>
        <dbReference type="ChEBI" id="CHEBI:49883"/>
        <label>1</label>
        <note>4Fe-4S-S-AdoMet</note>
    </ligand>
</feature>
<feature type="binding site" evidence="1">
    <location>
        <position position="24"/>
    </location>
    <ligand>
        <name>[4Fe-4S] cluster</name>
        <dbReference type="ChEBI" id="CHEBI:49883"/>
        <label>1</label>
        <note>4Fe-4S-S-AdoMet</note>
    </ligand>
</feature>
<feature type="binding site" evidence="1">
    <location>
        <position position="27"/>
    </location>
    <ligand>
        <name>[4Fe-4S] cluster</name>
        <dbReference type="ChEBI" id="CHEBI:49883"/>
        <label>1</label>
        <note>4Fe-4S-S-AdoMet</note>
    </ligand>
</feature>
<feature type="binding site" evidence="1">
    <location>
        <position position="60"/>
    </location>
    <ligand>
        <name>GTP</name>
        <dbReference type="ChEBI" id="CHEBI:37565"/>
    </ligand>
</feature>
<feature type="binding site" evidence="1">
    <location>
        <position position="64"/>
    </location>
    <ligand>
        <name>S-adenosyl-L-methionine</name>
        <dbReference type="ChEBI" id="CHEBI:59789"/>
    </ligand>
</feature>
<feature type="binding site" evidence="1">
    <location>
        <position position="90"/>
    </location>
    <ligand>
        <name>GTP</name>
        <dbReference type="ChEBI" id="CHEBI:37565"/>
    </ligand>
</feature>
<feature type="binding site" evidence="1">
    <location>
        <position position="114"/>
    </location>
    <ligand>
        <name>S-adenosyl-L-methionine</name>
        <dbReference type="ChEBI" id="CHEBI:59789"/>
    </ligand>
</feature>
<feature type="binding site" evidence="1">
    <location>
        <position position="151"/>
    </location>
    <ligand>
        <name>GTP</name>
        <dbReference type="ChEBI" id="CHEBI:37565"/>
    </ligand>
</feature>
<feature type="binding site" evidence="1">
    <location>
        <position position="245"/>
    </location>
    <ligand>
        <name>[4Fe-4S] cluster</name>
        <dbReference type="ChEBI" id="CHEBI:49883"/>
        <label>2</label>
        <note>4Fe-4S-substrate</note>
    </ligand>
</feature>
<feature type="binding site" evidence="1">
    <location>
        <position position="248"/>
    </location>
    <ligand>
        <name>[4Fe-4S] cluster</name>
        <dbReference type="ChEBI" id="CHEBI:49883"/>
        <label>2</label>
        <note>4Fe-4S-substrate</note>
    </ligand>
</feature>
<feature type="binding site" evidence="1">
    <location>
        <begin position="250"/>
        <end position="252"/>
    </location>
    <ligand>
        <name>GTP</name>
        <dbReference type="ChEBI" id="CHEBI:37565"/>
    </ligand>
</feature>
<feature type="binding site" evidence="1">
    <location>
        <position position="262"/>
    </location>
    <ligand>
        <name>[4Fe-4S] cluster</name>
        <dbReference type="ChEBI" id="CHEBI:49883"/>
        <label>2</label>
        <note>4Fe-4S-substrate</note>
    </ligand>
</feature>
<sequence length="308" mass="35306">MIDRFGRPLEDLRITLTHVCNFECFFCHMEGEEGDNYILSKEDILLVAKVAKNFGINSVKLTGGEPTLRRDLVEIVRGLKQLGYRDVSMTTNGFLLKDLAYKLKLAGLDRINVSLHAISRETFKKITGVDAFDRVIEGIKSAIDVGLVPVKLNFVVNRRNREEVFKFIELSQNLGVNEIHLIELHPVGLGKLAFKEHDDLREIEEYIEKISIKKQIRKKHFRPRYVLPSGLIVEVVKPYANPIFCAGCNRIRLSVDGKLKTCLYREDNVIDILDILKGEYSEDVKEELLGRAFMIAIAIREPNFKYKI</sequence>
<organism>
    <name type="scientific">Saccharolobus islandicus (strain M.16.27)</name>
    <name type="common">Sulfolobus islandicus</name>
    <dbReference type="NCBI Taxonomy" id="427318"/>
    <lineage>
        <taxon>Archaea</taxon>
        <taxon>Thermoproteota</taxon>
        <taxon>Thermoprotei</taxon>
        <taxon>Sulfolobales</taxon>
        <taxon>Sulfolobaceae</taxon>
        <taxon>Saccharolobus</taxon>
    </lineage>
</organism>
<evidence type="ECO:0000255" key="1">
    <source>
        <dbReference type="HAMAP-Rule" id="MF_01225"/>
    </source>
</evidence>
<evidence type="ECO:0000255" key="2">
    <source>
        <dbReference type="PROSITE-ProRule" id="PRU01266"/>
    </source>
</evidence>
<proteinExistence type="inferred from homology"/>
<accession>C3MZ99</accession>
<dbReference type="EC" id="4.1.99.22" evidence="1"/>
<dbReference type="EMBL" id="CP001401">
    <property type="protein sequence ID" value="ACP55731.1"/>
    <property type="molecule type" value="Genomic_DNA"/>
</dbReference>
<dbReference type="RefSeq" id="WP_012711718.1">
    <property type="nucleotide sequence ID" value="NC_012632.1"/>
</dbReference>
<dbReference type="SMR" id="C3MZ99"/>
<dbReference type="GeneID" id="84062093"/>
<dbReference type="KEGG" id="sim:M1627_1859"/>
<dbReference type="HOGENOM" id="CLU_009273_0_1_2"/>
<dbReference type="UniPathway" id="UPA00344"/>
<dbReference type="Proteomes" id="UP000002307">
    <property type="component" value="Chromosome"/>
</dbReference>
<dbReference type="GO" id="GO:0051539">
    <property type="term" value="F:4 iron, 4 sulfur cluster binding"/>
    <property type="evidence" value="ECO:0007669"/>
    <property type="project" value="UniProtKB-UniRule"/>
</dbReference>
<dbReference type="GO" id="GO:0061799">
    <property type="term" value="F:cyclic pyranopterin monophosphate synthase activity"/>
    <property type="evidence" value="ECO:0007669"/>
    <property type="project" value="TreeGrafter"/>
</dbReference>
<dbReference type="GO" id="GO:0061798">
    <property type="term" value="F:GTP 3',8'-cyclase activity"/>
    <property type="evidence" value="ECO:0007669"/>
    <property type="project" value="UniProtKB-UniRule"/>
</dbReference>
<dbReference type="GO" id="GO:0005525">
    <property type="term" value="F:GTP binding"/>
    <property type="evidence" value="ECO:0007669"/>
    <property type="project" value="UniProtKB-UniRule"/>
</dbReference>
<dbReference type="GO" id="GO:0046872">
    <property type="term" value="F:metal ion binding"/>
    <property type="evidence" value="ECO:0007669"/>
    <property type="project" value="UniProtKB-KW"/>
</dbReference>
<dbReference type="GO" id="GO:1904047">
    <property type="term" value="F:S-adenosyl-L-methionine binding"/>
    <property type="evidence" value="ECO:0007669"/>
    <property type="project" value="UniProtKB-UniRule"/>
</dbReference>
<dbReference type="GO" id="GO:0006777">
    <property type="term" value="P:Mo-molybdopterin cofactor biosynthetic process"/>
    <property type="evidence" value="ECO:0007669"/>
    <property type="project" value="UniProtKB-UniRule"/>
</dbReference>
<dbReference type="CDD" id="cd01335">
    <property type="entry name" value="Radical_SAM"/>
    <property type="match status" value="1"/>
</dbReference>
<dbReference type="CDD" id="cd21117">
    <property type="entry name" value="Twitch_MoaA"/>
    <property type="match status" value="1"/>
</dbReference>
<dbReference type="Gene3D" id="3.20.20.70">
    <property type="entry name" value="Aldolase class I"/>
    <property type="match status" value="1"/>
</dbReference>
<dbReference type="HAMAP" id="MF_01225_A">
    <property type="entry name" value="MoaA_A"/>
    <property type="match status" value="1"/>
</dbReference>
<dbReference type="InterPro" id="IPR013785">
    <property type="entry name" value="Aldolase_TIM"/>
</dbReference>
<dbReference type="InterPro" id="IPR006638">
    <property type="entry name" value="Elp3/MiaA/NifB-like_rSAM"/>
</dbReference>
<dbReference type="InterPro" id="IPR013485">
    <property type="entry name" value="MoaA_arc"/>
</dbReference>
<dbReference type="InterPro" id="IPR010505">
    <property type="entry name" value="MoaA_twitch"/>
</dbReference>
<dbReference type="InterPro" id="IPR050105">
    <property type="entry name" value="MoCo_biosynth_MoaA/MoaC"/>
</dbReference>
<dbReference type="InterPro" id="IPR007197">
    <property type="entry name" value="rSAM"/>
</dbReference>
<dbReference type="NCBIfam" id="TIGR02668">
    <property type="entry name" value="moaA_archaeal"/>
    <property type="match status" value="1"/>
</dbReference>
<dbReference type="NCBIfam" id="NF001199">
    <property type="entry name" value="PRK00164.2-1"/>
    <property type="match status" value="1"/>
</dbReference>
<dbReference type="PANTHER" id="PTHR22960:SF0">
    <property type="entry name" value="MOLYBDENUM COFACTOR BIOSYNTHESIS PROTEIN 1"/>
    <property type="match status" value="1"/>
</dbReference>
<dbReference type="PANTHER" id="PTHR22960">
    <property type="entry name" value="MOLYBDOPTERIN COFACTOR SYNTHESIS PROTEIN A"/>
    <property type="match status" value="1"/>
</dbReference>
<dbReference type="Pfam" id="PF06463">
    <property type="entry name" value="Mob_synth_C"/>
    <property type="match status" value="1"/>
</dbReference>
<dbReference type="Pfam" id="PF04055">
    <property type="entry name" value="Radical_SAM"/>
    <property type="match status" value="1"/>
</dbReference>
<dbReference type="SFLD" id="SFLDG01383">
    <property type="entry name" value="cyclic_pyranopterin_phosphate"/>
    <property type="match status" value="1"/>
</dbReference>
<dbReference type="SFLD" id="SFLDG01216">
    <property type="entry name" value="thioether_bond_formation_requi"/>
    <property type="match status" value="1"/>
</dbReference>
<dbReference type="SMART" id="SM00729">
    <property type="entry name" value="Elp3"/>
    <property type="match status" value="1"/>
</dbReference>
<dbReference type="SUPFAM" id="SSF102114">
    <property type="entry name" value="Radical SAM enzymes"/>
    <property type="match status" value="1"/>
</dbReference>
<dbReference type="PROSITE" id="PS51918">
    <property type="entry name" value="RADICAL_SAM"/>
    <property type="match status" value="1"/>
</dbReference>
<name>MOAA_SACI3</name>
<protein>
    <recommendedName>
        <fullName evidence="1">Probable GTP 3',8-cyclase</fullName>
        <ecNumber evidence="1">4.1.99.22</ecNumber>
    </recommendedName>
    <alternativeName>
        <fullName evidence="1">Molybdenum cofactor biosynthesis protein A</fullName>
    </alternativeName>
</protein>
<gene>
    <name evidence="1" type="primary">moaA</name>
    <name type="ordered locus">M1627_1859</name>
</gene>
<comment type="function">
    <text evidence="1">Catalyzes the cyclization of GTP to (8S)-3',8-cyclo-7,8-dihydroguanosine 5'-triphosphate.</text>
</comment>
<comment type="catalytic activity">
    <reaction evidence="1">
        <text>GTP + AH2 + S-adenosyl-L-methionine = (8S)-3',8-cyclo-7,8-dihydroguanosine 5'-triphosphate + 5'-deoxyadenosine + L-methionine + A + H(+)</text>
        <dbReference type="Rhea" id="RHEA:49576"/>
        <dbReference type="ChEBI" id="CHEBI:13193"/>
        <dbReference type="ChEBI" id="CHEBI:15378"/>
        <dbReference type="ChEBI" id="CHEBI:17319"/>
        <dbReference type="ChEBI" id="CHEBI:17499"/>
        <dbReference type="ChEBI" id="CHEBI:37565"/>
        <dbReference type="ChEBI" id="CHEBI:57844"/>
        <dbReference type="ChEBI" id="CHEBI:59789"/>
        <dbReference type="ChEBI" id="CHEBI:131766"/>
        <dbReference type="EC" id="4.1.99.22"/>
    </reaction>
</comment>
<comment type="cofactor">
    <cofactor evidence="1">
        <name>[4Fe-4S] cluster</name>
        <dbReference type="ChEBI" id="CHEBI:49883"/>
    </cofactor>
    <text evidence="1">Binds 2 [4Fe-4S] clusters. Binds 1 [4Fe-4S] cluster coordinated with 3 cysteines and an exchangeable S-adenosyl-L-methionine and 1 [4Fe-4S] cluster coordinated with 3 cysteines and the GTP-derived substrate.</text>
</comment>
<comment type="pathway">
    <text evidence="1">Cofactor biosynthesis; molybdopterin biosynthesis.</text>
</comment>
<comment type="similarity">
    <text evidence="1">Belongs to the radical SAM superfamily. MoaA family.</text>
</comment>